<gene>
    <name evidence="1" type="primary">pgk2</name>
    <name type="ordered locus">MmarC7_0676</name>
</gene>
<name>PGK2_METM7</name>
<sequence>MTFDENISRILVTDKEYDMPFSKGLLARSLSAAGMKPSESYTLAREIERDLTEQNVLKISKDELRRRVYYTLINRDYEGIGEKYLLWRRVLKKHSIIILVGGSSGVGTSTIAFELASRLGIPSVIGTDSIREVMRRSISKDLVPMLYESSYTAWTALRRSQWEEQDTKGMHLLGFERHVEPVLLGIESIIDRSLTEGTSVIIEGTHIVPGLMGEKYQSMPNVIFLNLTLSSEEIHKKRFTARAKVSDRPLERYLENFEIIKEINQYIVEKSKENNVPVIENVSISETVQKCLEIVTERFSNLTDEPIDSDFY</sequence>
<keyword id="KW-0067">ATP-binding</keyword>
<keyword id="KW-0418">Kinase</keyword>
<keyword id="KW-0547">Nucleotide-binding</keyword>
<keyword id="KW-0808">Transferase</keyword>
<organism>
    <name type="scientific">Methanococcus maripaludis (strain C7 / ATCC BAA-1331)</name>
    <dbReference type="NCBI Taxonomy" id="426368"/>
    <lineage>
        <taxon>Archaea</taxon>
        <taxon>Methanobacteriati</taxon>
        <taxon>Methanobacteriota</taxon>
        <taxon>Methanomada group</taxon>
        <taxon>Methanococci</taxon>
        <taxon>Methanococcales</taxon>
        <taxon>Methanococcaceae</taxon>
        <taxon>Methanococcus</taxon>
    </lineage>
</organism>
<proteinExistence type="inferred from homology"/>
<dbReference type="EC" id="2.7.2.16" evidence="1"/>
<dbReference type="EMBL" id="CP000745">
    <property type="protein sequence ID" value="ABR65743.1"/>
    <property type="molecule type" value="Genomic_DNA"/>
</dbReference>
<dbReference type="STRING" id="426368.MmarC7_0676"/>
<dbReference type="KEGG" id="mmz:MmarC7_0676"/>
<dbReference type="eggNOG" id="arCOG01967">
    <property type="taxonomic scope" value="Archaea"/>
</dbReference>
<dbReference type="HOGENOM" id="CLU_848909_0_0_2"/>
<dbReference type="OrthoDB" id="358692at2157"/>
<dbReference type="UniPathway" id="UPA00551">
    <property type="reaction ID" value="UER00609"/>
</dbReference>
<dbReference type="GO" id="GO:0005524">
    <property type="term" value="F:ATP binding"/>
    <property type="evidence" value="ECO:0007669"/>
    <property type="project" value="UniProtKB-KW"/>
</dbReference>
<dbReference type="GO" id="GO:0016301">
    <property type="term" value="F:kinase activity"/>
    <property type="evidence" value="ECO:0007669"/>
    <property type="project" value="UniProtKB-KW"/>
</dbReference>
<dbReference type="GO" id="GO:0016774">
    <property type="term" value="F:phosphotransferase activity, carboxyl group as acceptor"/>
    <property type="evidence" value="ECO:0007669"/>
    <property type="project" value="UniProtKB-UniRule"/>
</dbReference>
<dbReference type="Gene3D" id="3.40.50.300">
    <property type="entry name" value="P-loop containing nucleotide triphosphate hydrolases"/>
    <property type="match status" value="1"/>
</dbReference>
<dbReference type="HAMAP" id="MF_00769">
    <property type="entry name" value="2PGK"/>
    <property type="match status" value="1"/>
</dbReference>
<dbReference type="InterPro" id="IPR020872">
    <property type="entry name" value="2PKG"/>
</dbReference>
<dbReference type="InterPro" id="IPR005144">
    <property type="entry name" value="ATP-cone_dom"/>
</dbReference>
<dbReference type="InterPro" id="IPR027417">
    <property type="entry name" value="P-loop_NTPase"/>
</dbReference>
<dbReference type="NCBIfam" id="NF003259">
    <property type="entry name" value="PRK04220.1"/>
    <property type="match status" value="1"/>
</dbReference>
<dbReference type="PANTHER" id="PTHR33477">
    <property type="entry name" value="P-LOOP NTPASE DOMAIN-CONTAINING PROTEIN LPA1 HOMOLOG 1"/>
    <property type="match status" value="1"/>
</dbReference>
<dbReference type="PANTHER" id="PTHR33477:SF3">
    <property type="entry name" value="P-LOOP NTPASE DOMAIN-CONTAINING PROTEIN LPA1 HOMOLOG 1"/>
    <property type="match status" value="1"/>
</dbReference>
<dbReference type="Pfam" id="PF03477">
    <property type="entry name" value="ATP-cone"/>
    <property type="match status" value="1"/>
</dbReference>
<dbReference type="SUPFAM" id="SSF52540">
    <property type="entry name" value="P-loop containing nucleoside triphosphate hydrolases"/>
    <property type="match status" value="1"/>
</dbReference>
<dbReference type="PROSITE" id="PS51161">
    <property type="entry name" value="ATP_CONE"/>
    <property type="match status" value="1"/>
</dbReference>
<reference key="1">
    <citation type="submission" date="2007-06" db="EMBL/GenBank/DDBJ databases">
        <title>Complete sequence of Methanococcus maripaludis C7.</title>
        <authorList>
            <consortium name="US DOE Joint Genome Institute"/>
            <person name="Copeland A."/>
            <person name="Lucas S."/>
            <person name="Lapidus A."/>
            <person name="Barry K."/>
            <person name="Glavina del Rio T."/>
            <person name="Dalin E."/>
            <person name="Tice H."/>
            <person name="Pitluck S."/>
            <person name="Clum A."/>
            <person name="Schmutz J."/>
            <person name="Larimer F."/>
            <person name="Land M."/>
            <person name="Hauser L."/>
            <person name="Kyrpides N."/>
            <person name="Anderson I."/>
            <person name="Sieprawska-Lupa M."/>
            <person name="Whitman W.B."/>
            <person name="Richardson P."/>
        </authorList>
    </citation>
    <scope>NUCLEOTIDE SEQUENCE [LARGE SCALE GENOMIC DNA]</scope>
    <source>
        <strain>C7 / ATCC BAA-1331</strain>
    </source>
</reference>
<accession>A6VH17</accession>
<evidence type="ECO:0000255" key="1">
    <source>
        <dbReference type="HAMAP-Rule" id="MF_00769"/>
    </source>
</evidence>
<feature type="chain" id="PRO_1000062236" description="2-phosphoglycerate kinase">
    <location>
        <begin position="1"/>
        <end position="312"/>
    </location>
</feature>
<feature type="domain" description="ATP-cone" evidence="1">
    <location>
        <begin position="8"/>
        <end position="95"/>
    </location>
</feature>
<protein>
    <recommendedName>
        <fullName evidence="1">2-phosphoglycerate kinase</fullName>
        <shortName evidence="1">2PGK</shortName>
        <ecNumber evidence="1">2.7.2.16</ecNumber>
    </recommendedName>
</protein>
<comment type="function">
    <text evidence="1">Catalyzes the phosphorylation of 2-phosphoglycerate to 2,3-diphosphoglycerate. Involved in the biosynthesis of cyclic 2,3-bisphosphoglycerate, a thermoprotectant.</text>
</comment>
<comment type="catalytic activity">
    <reaction evidence="1">
        <text>(2R)-2-phosphoglycerate + ATP = (2R)-2,3-bisphosphoglycerate + ADP + H(+)</text>
        <dbReference type="Rhea" id="RHEA:42408"/>
        <dbReference type="ChEBI" id="CHEBI:15378"/>
        <dbReference type="ChEBI" id="CHEBI:30616"/>
        <dbReference type="ChEBI" id="CHEBI:58248"/>
        <dbReference type="ChEBI" id="CHEBI:58289"/>
        <dbReference type="ChEBI" id="CHEBI:456216"/>
        <dbReference type="EC" id="2.7.2.16"/>
    </reaction>
</comment>
<comment type="cofactor">
    <cofactor evidence="1">
        <name>a divalent metal cation</name>
        <dbReference type="ChEBI" id="CHEBI:60240"/>
    </cofactor>
</comment>
<comment type="pathway">
    <text evidence="1">Thermoadapter biosynthesis; cyclic 2,3-diphosphoglycerate biosynthesis; cyclic 2,3-diphosphoglycerate from 2-phospho-D-glycerate: step 1/2.</text>
</comment>
<comment type="similarity">
    <text evidence="1">Belongs to the 2-phosphoglycerate kinase family.</text>
</comment>